<reference key="1">
    <citation type="journal article" date="2004" name="Nat. Genet.">
        <title>Evidence in the Legionella pneumophila genome for exploitation of host cell functions and high genome plasticity.</title>
        <authorList>
            <person name="Cazalet C."/>
            <person name="Rusniok C."/>
            <person name="Brueggemann H."/>
            <person name="Zidane N."/>
            <person name="Magnier A."/>
            <person name="Ma L."/>
            <person name="Tichit M."/>
            <person name="Jarraud S."/>
            <person name="Bouchier C."/>
            <person name="Vandenesch F."/>
            <person name="Kunst F."/>
            <person name="Etienne J."/>
            <person name="Glaser P."/>
            <person name="Buchrieser C."/>
        </authorList>
    </citation>
    <scope>NUCLEOTIDE SEQUENCE [LARGE SCALE GENOMIC DNA]</scope>
    <source>
        <strain>Lens</strain>
    </source>
</reference>
<dbReference type="EMBL" id="CR628337">
    <property type="protein sequence ID" value="CAH17155.1"/>
    <property type="molecule type" value="Genomic_DNA"/>
</dbReference>
<dbReference type="RefSeq" id="WP_010948667.1">
    <property type="nucleotide sequence ID" value="NC_006369.1"/>
</dbReference>
<dbReference type="SMR" id="Q5WSG7"/>
<dbReference type="GeneID" id="57036989"/>
<dbReference type="KEGG" id="lpf:lpl2911"/>
<dbReference type="LegioList" id="lpl2911"/>
<dbReference type="HOGENOM" id="CLU_050669_0_1_6"/>
<dbReference type="Proteomes" id="UP000002517">
    <property type="component" value="Chromosome"/>
</dbReference>
<dbReference type="GO" id="GO:0005886">
    <property type="term" value="C:plasma membrane"/>
    <property type="evidence" value="ECO:0007669"/>
    <property type="project" value="UniProtKB-SubCell"/>
</dbReference>
<dbReference type="GO" id="GO:0045259">
    <property type="term" value="C:proton-transporting ATP synthase complex"/>
    <property type="evidence" value="ECO:0007669"/>
    <property type="project" value="UniProtKB-KW"/>
</dbReference>
<dbReference type="GO" id="GO:0005524">
    <property type="term" value="F:ATP binding"/>
    <property type="evidence" value="ECO:0007669"/>
    <property type="project" value="UniProtKB-UniRule"/>
</dbReference>
<dbReference type="GO" id="GO:0046933">
    <property type="term" value="F:proton-transporting ATP synthase activity, rotational mechanism"/>
    <property type="evidence" value="ECO:0007669"/>
    <property type="project" value="UniProtKB-UniRule"/>
</dbReference>
<dbReference type="GO" id="GO:0042777">
    <property type="term" value="P:proton motive force-driven plasma membrane ATP synthesis"/>
    <property type="evidence" value="ECO:0007669"/>
    <property type="project" value="UniProtKB-UniRule"/>
</dbReference>
<dbReference type="CDD" id="cd12151">
    <property type="entry name" value="F1-ATPase_gamma"/>
    <property type="match status" value="1"/>
</dbReference>
<dbReference type="FunFam" id="1.10.287.80:FF:000005">
    <property type="entry name" value="ATP synthase gamma chain"/>
    <property type="match status" value="1"/>
</dbReference>
<dbReference type="FunFam" id="3.40.1380.10:FF:000006">
    <property type="entry name" value="ATP synthase gamma chain"/>
    <property type="match status" value="1"/>
</dbReference>
<dbReference type="Gene3D" id="3.40.1380.10">
    <property type="match status" value="1"/>
</dbReference>
<dbReference type="Gene3D" id="1.10.287.80">
    <property type="entry name" value="ATP synthase, gamma subunit, helix hairpin domain"/>
    <property type="match status" value="2"/>
</dbReference>
<dbReference type="HAMAP" id="MF_00815">
    <property type="entry name" value="ATP_synth_gamma_bact"/>
    <property type="match status" value="1"/>
</dbReference>
<dbReference type="InterPro" id="IPR035968">
    <property type="entry name" value="ATP_synth_F1_ATPase_gsu"/>
</dbReference>
<dbReference type="InterPro" id="IPR000131">
    <property type="entry name" value="ATP_synth_F1_gsu"/>
</dbReference>
<dbReference type="InterPro" id="IPR023632">
    <property type="entry name" value="ATP_synth_F1_gsu_CS"/>
</dbReference>
<dbReference type="NCBIfam" id="TIGR01146">
    <property type="entry name" value="ATPsyn_F1gamma"/>
    <property type="match status" value="1"/>
</dbReference>
<dbReference type="NCBIfam" id="NF004144">
    <property type="entry name" value="PRK05621.1-1"/>
    <property type="match status" value="1"/>
</dbReference>
<dbReference type="PANTHER" id="PTHR11693">
    <property type="entry name" value="ATP SYNTHASE GAMMA CHAIN"/>
    <property type="match status" value="1"/>
</dbReference>
<dbReference type="PANTHER" id="PTHR11693:SF22">
    <property type="entry name" value="ATP SYNTHASE SUBUNIT GAMMA, MITOCHONDRIAL"/>
    <property type="match status" value="1"/>
</dbReference>
<dbReference type="Pfam" id="PF00231">
    <property type="entry name" value="ATP-synt"/>
    <property type="match status" value="1"/>
</dbReference>
<dbReference type="PRINTS" id="PR00126">
    <property type="entry name" value="ATPASEGAMMA"/>
</dbReference>
<dbReference type="SUPFAM" id="SSF52943">
    <property type="entry name" value="ATP synthase (F1-ATPase), gamma subunit"/>
    <property type="match status" value="1"/>
</dbReference>
<dbReference type="PROSITE" id="PS00153">
    <property type="entry name" value="ATPASE_GAMMA"/>
    <property type="match status" value="1"/>
</dbReference>
<keyword id="KW-0066">ATP synthesis</keyword>
<keyword id="KW-0997">Cell inner membrane</keyword>
<keyword id="KW-1003">Cell membrane</keyword>
<keyword id="KW-0139">CF(1)</keyword>
<keyword id="KW-0375">Hydrogen ion transport</keyword>
<keyword id="KW-0406">Ion transport</keyword>
<keyword id="KW-0472">Membrane</keyword>
<keyword id="KW-0813">Transport</keyword>
<accession>Q5WSG7</accession>
<comment type="function">
    <text evidence="1">Produces ATP from ADP in the presence of a proton gradient across the membrane. The gamma chain is believed to be important in regulating ATPase activity and the flow of protons through the CF(0) complex.</text>
</comment>
<comment type="subunit">
    <text evidence="1">F-type ATPases have 2 components, CF(1) - the catalytic core - and CF(0) - the membrane proton channel. CF(1) has five subunits: alpha(3), beta(3), gamma(1), delta(1), epsilon(1). CF(0) has three main subunits: a, b and c.</text>
</comment>
<comment type="subcellular location">
    <subcellularLocation>
        <location evidence="1">Cell inner membrane</location>
        <topology evidence="1">Peripheral membrane protein</topology>
    </subcellularLocation>
</comment>
<comment type="similarity">
    <text evidence="1">Belongs to the ATPase gamma chain family.</text>
</comment>
<proteinExistence type="inferred from homology"/>
<name>ATPG_LEGPL</name>
<protein>
    <recommendedName>
        <fullName evidence="1">ATP synthase gamma chain</fullName>
    </recommendedName>
    <alternativeName>
        <fullName evidence="1">ATP synthase F1 sector gamma subunit</fullName>
    </alternativeName>
    <alternativeName>
        <fullName evidence="1">F-ATPase gamma subunit</fullName>
    </alternativeName>
</protein>
<evidence type="ECO:0000255" key="1">
    <source>
        <dbReference type="HAMAP-Rule" id="MF_00815"/>
    </source>
</evidence>
<gene>
    <name evidence="1" type="primary">atpG</name>
    <name type="ordered locus">lpl2911</name>
</gene>
<feature type="chain" id="PRO_0000073303" description="ATP synthase gamma chain">
    <location>
        <begin position="1"/>
        <end position="288"/>
    </location>
</feature>
<sequence>MAGAKEIRSKISSINKTRKITRAMEMVAASKMRKTQERMRASKPYANKIYEVIKHIARAASEYRHPFMSEREIKRIGIIVVTTDRGLCGGLNSNLFRETIRTIRNWQEHGKEVDIAVIGRKGQAFFRRVGGNILGSIDHLGDTPSINDFIGVVKIMLDAYYNGTIDSLHIVYNEFINTMTQKPFVKQLLPLPKSEEDKKTLGHHWDYIYEPEAKELLDEILERYIELQVYQAVVENIACEQAAKMIAMKSATDNAGDLIKEFQLAYNKARQAAITQELAEIVGGAAAL</sequence>
<organism>
    <name type="scientific">Legionella pneumophila (strain Lens)</name>
    <dbReference type="NCBI Taxonomy" id="297245"/>
    <lineage>
        <taxon>Bacteria</taxon>
        <taxon>Pseudomonadati</taxon>
        <taxon>Pseudomonadota</taxon>
        <taxon>Gammaproteobacteria</taxon>
        <taxon>Legionellales</taxon>
        <taxon>Legionellaceae</taxon>
        <taxon>Legionella</taxon>
    </lineage>
</organism>